<evidence type="ECO:0000255" key="1">
    <source>
        <dbReference type="HAMAP-Rule" id="MF_01114"/>
    </source>
</evidence>
<dbReference type="EMBL" id="CP001396">
    <property type="protein sequence ID" value="ACR65442.1"/>
    <property type="molecule type" value="Genomic_DNA"/>
</dbReference>
<dbReference type="RefSeq" id="WP_000140508.1">
    <property type="nucleotide sequence ID" value="NC_012759.1"/>
</dbReference>
<dbReference type="SMR" id="C4ZYU3"/>
<dbReference type="KEGG" id="ebw:BWG_2434"/>
<dbReference type="HOGENOM" id="CLU_066607_3_2_6"/>
<dbReference type="GO" id="GO:0005737">
    <property type="term" value="C:cytoplasm"/>
    <property type="evidence" value="ECO:0007669"/>
    <property type="project" value="UniProtKB-SubCell"/>
</dbReference>
<dbReference type="GO" id="GO:0006282">
    <property type="term" value="P:regulation of DNA repair"/>
    <property type="evidence" value="ECO:0007669"/>
    <property type="project" value="UniProtKB-UniRule"/>
</dbReference>
<dbReference type="FunFam" id="1.10.10.10:FF:000133">
    <property type="entry name" value="Regulatory protein RecX"/>
    <property type="match status" value="1"/>
</dbReference>
<dbReference type="FunFam" id="1.10.10.10:FF:000134">
    <property type="entry name" value="Regulatory protein RecX"/>
    <property type="match status" value="1"/>
</dbReference>
<dbReference type="FunFam" id="1.10.10.10:FF:000209">
    <property type="entry name" value="Regulatory protein RecX"/>
    <property type="match status" value="1"/>
</dbReference>
<dbReference type="Gene3D" id="1.10.10.10">
    <property type="entry name" value="Winged helix-like DNA-binding domain superfamily/Winged helix DNA-binding domain"/>
    <property type="match status" value="3"/>
</dbReference>
<dbReference type="HAMAP" id="MF_01114">
    <property type="entry name" value="RecX"/>
    <property type="match status" value="1"/>
</dbReference>
<dbReference type="InterPro" id="IPR053926">
    <property type="entry name" value="RecX_HTH_1st"/>
</dbReference>
<dbReference type="InterPro" id="IPR053924">
    <property type="entry name" value="RecX_HTH_2nd"/>
</dbReference>
<dbReference type="InterPro" id="IPR053925">
    <property type="entry name" value="RecX_HTH_3rd"/>
</dbReference>
<dbReference type="InterPro" id="IPR003783">
    <property type="entry name" value="Regulatory_RecX"/>
</dbReference>
<dbReference type="InterPro" id="IPR036388">
    <property type="entry name" value="WH-like_DNA-bd_sf"/>
</dbReference>
<dbReference type="NCBIfam" id="NF001052">
    <property type="entry name" value="PRK00117.1-1"/>
    <property type="match status" value="1"/>
</dbReference>
<dbReference type="PANTHER" id="PTHR33602">
    <property type="entry name" value="REGULATORY PROTEIN RECX FAMILY PROTEIN"/>
    <property type="match status" value="1"/>
</dbReference>
<dbReference type="PANTHER" id="PTHR33602:SF1">
    <property type="entry name" value="REGULATORY PROTEIN RECX FAMILY PROTEIN"/>
    <property type="match status" value="1"/>
</dbReference>
<dbReference type="Pfam" id="PF21982">
    <property type="entry name" value="RecX_HTH1"/>
    <property type="match status" value="1"/>
</dbReference>
<dbReference type="Pfam" id="PF02631">
    <property type="entry name" value="RecX_HTH2"/>
    <property type="match status" value="1"/>
</dbReference>
<dbReference type="Pfam" id="PF21981">
    <property type="entry name" value="RecX_HTH3"/>
    <property type="match status" value="1"/>
</dbReference>
<comment type="function">
    <text evidence="1">Modulates RecA activity.</text>
</comment>
<comment type="subcellular location">
    <subcellularLocation>
        <location evidence="1">Cytoplasm</location>
    </subcellularLocation>
</comment>
<comment type="similarity">
    <text evidence="1">Belongs to the RecX family.</text>
</comment>
<sequence length="166" mass="19424">MTESTSRRPAYARLLDRAVRILAVRDHSEQELRRKLAAPIMGKNGPEEIDATAEDYERVIAWCHEHGYLDDSRFVARFIASRSRKGYGPARIRQELNQKGISREATEKAMRECDIDWCALARDQATRKYGEPLPTVFSEKVKIQRFLLYRGYLMEDIQEIWRNFAD</sequence>
<protein>
    <recommendedName>
        <fullName evidence="1">Regulatory protein RecX</fullName>
    </recommendedName>
</protein>
<proteinExistence type="inferred from homology"/>
<name>RECX_ECOBW</name>
<reference key="1">
    <citation type="journal article" date="2009" name="J. Bacteriol.">
        <title>Genomic sequencing reveals regulatory mutations and recombinational events in the widely used MC4100 lineage of Escherichia coli K-12.</title>
        <authorList>
            <person name="Ferenci T."/>
            <person name="Zhou Z."/>
            <person name="Betteridge T."/>
            <person name="Ren Y."/>
            <person name="Liu Y."/>
            <person name="Feng L."/>
            <person name="Reeves P.R."/>
            <person name="Wang L."/>
        </authorList>
    </citation>
    <scope>NUCLEOTIDE SEQUENCE [LARGE SCALE GENOMIC DNA]</scope>
    <source>
        <strain>K12 / MC4100 / BW2952</strain>
    </source>
</reference>
<organism>
    <name type="scientific">Escherichia coli (strain K12 / MC4100 / BW2952)</name>
    <dbReference type="NCBI Taxonomy" id="595496"/>
    <lineage>
        <taxon>Bacteria</taxon>
        <taxon>Pseudomonadati</taxon>
        <taxon>Pseudomonadota</taxon>
        <taxon>Gammaproteobacteria</taxon>
        <taxon>Enterobacterales</taxon>
        <taxon>Enterobacteriaceae</taxon>
        <taxon>Escherichia</taxon>
    </lineage>
</organism>
<gene>
    <name evidence="1" type="primary">recX</name>
    <name type="ordered locus">BWG_2434</name>
</gene>
<keyword id="KW-0963">Cytoplasm</keyword>
<accession>C4ZYU3</accession>
<feature type="chain" id="PRO_1000213592" description="Regulatory protein RecX">
    <location>
        <begin position="1"/>
        <end position="166"/>
    </location>
</feature>